<comment type="function">
    <text evidence="1">Forms part of the ribosomal stalk, playing a central role in the interaction of the ribosome with GTP-bound translation factors.</text>
</comment>
<comment type="subunit">
    <text evidence="1">Part of the ribosomal stalk of the 50S ribosomal subunit. The N-terminus interacts with L11 and the large rRNA to form the base of the stalk. The C-terminus forms an elongated spine to which L12 dimers bind in a sequential fashion forming a multimeric L10(L12)X complex.</text>
</comment>
<comment type="similarity">
    <text evidence="1">Belongs to the universal ribosomal protein uL10 family.</text>
</comment>
<protein>
    <recommendedName>
        <fullName evidence="1">Large ribosomal subunit protein uL10</fullName>
    </recommendedName>
    <alternativeName>
        <fullName evidence="2">50S ribosomal protein L10</fullName>
    </alternativeName>
</protein>
<organism>
    <name type="scientific">Burkholderia pseudomallei (strain 1710b)</name>
    <dbReference type="NCBI Taxonomy" id="320372"/>
    <lineage>
        <taxon>Bacteria</taxon>
        <taxon>Pseudomonadati</taxon>
        <taxon>Pseudomonadota</taxon>
        <taxon>Betaproteobacteria</taxon>
        <taxon>Burkholderiales</taxon>
        <taxon>Burkholderiaceae</taxon>
        <taxon>Burkholderia</taxon>
        <taxon>pseudomallei group</taxon>
    </lineage>
</organism>
<keyword id="KW-0687">Ribonucleoprotein</keyword>
<keyword id="KW-0689">Ribosomal protein</keyword>
<keyword id="KW-0694">RNA-binding</keyword>
<keyword id="KW-0699">rRNA-binding</keyword>
<sequence>MPLNREDKQAVVAEVAAQVAKAQTVVLAEYRGIAVGDLTTLRAKAREQKVYLRVLKNTLARRAVEGTPFAPLAEQMTGPLIYGISEDAIAAAKVVHDFSKSNDKLVIKAGSYDGKVMDKAGVQALASIPSREELLSKLLFVMQAPVSGFARALAALAEKKQAEAA</sequence>
<evidence type="ECO:0000255" key="1">
    <source>
        <dbReference type="HAMAP-Rule" id="MF_00362"/>
    </source>
</evidence>
<evidence type="ECO:0000305" key="2"/>
<dbReference type="EMBL" id="CP000124">
    <property type="protein sequence ID" value="ABA49769.1"/>
    <property type="molecule type" value="Genomic_DNA"/>
</dbReference>
<dbReference type="RefSeq" id="WP_004199864.1">
    <property type="nucleotide sequence ID" value="NC_007434.1"/>
</dbReference>
<dbReference type="SMR" id="Q3JMQ1"/>
<dbReference type="EnsemblBacteria" id="ABA49769">
    <property type="protein sequence ID" value="ABA49769"/>
    <property type="gene ID" value="BURPS1710b_3788"/>
</dbReference>
<dbReference type="GeneID" id="93061843"/>
<dbReference type="KEGG" id="bpm:BURPS1710b_3788"/>
<dbReference type="HOGENOM" id="CLU_092227_0_1_4"/>
<dbReference type="Proteomes" id="UP000002700">
    <property type="component" value="Chromosome I"/>
</dbReference>
<dbReference type="GO" id="GO:1990904">
    <property type="term" value="C:ribonucleoprotein complex"/>
    <property type="evidence" value="ECO:0007669"/>
    <property type="project" value="UniProtKB-KW"/>
</dbReference>
<dbReference type="GO" id="GO:0005840">
    <property type="term" value="C:ribosome"/>
    <property type="evidence" value="ECO:0007669"/>
    <property type="project" value="UniProtKB-KW"/>
</dbReference>
<dbReference type="GO" id="GO:0070180">
    <property type="term" value="F:large ribosomal subunit rRNA binding"/>
    <property type="evidence" value="ECO:0007669"/>
    <property type="project" value="UniProtKB-UniRule"/>
</dbReference>
<dbReference type="GO" id="GO:0006412">
    <property type="term" value="P:translation"/>
    <property type="evidence" value="ECO:0007669"/>
    <property type="project" value="UniProtKB-UniRule"/>
</dbReference>
<dbReference type="CDD" id="cd05797">
    <property type="entry name" value="Ribosomal_L10"/>
    <property type="match status" value="1"/>
</dbReference>
<dbReference type="Gene3D" id="3.30.70.1730">
    <property type="match status" value="1"/>
</dbReference>
<dbReference type="Gene3D" id="6.10.250.290">
    <property type="match status" value="1"/>
</dbReference>
<dbReference type="HAMAP" id="MF_00362">
    <property type="entry name" value="Ribosomal_uL10"/>
    <property type="match status" value="1"/>
</dbReference>
<dbReference type="InterPro" id="IPR001790">
    <property type="entry name" value="Ribosomal_uL10"/>
</dbReference>
<dbReference type="InterPro" id="IPR043141">
    <property type="entry name" value="Ribosomal_uL10-like_sf"/>
</dbReference>
<dbReference type="InterPro" id="IPR022973">
    <property type="entry name" value="Ribosomal_uL10_bac"/>
</dbReference>
<dbReference type="InterPro" id="IPR047865">
    <property type="entry name" value="Ribosomal_uL10_bac_type"/>
</dbReference>
<dbReference type="NCBIfam" id="NF000955">
    <property type="entry name" value="PRK00099.1-1"/>
    <property type="match status" value="1"/>
</dbReference>
<dbReference type="PANTHER" id="PTHR11560">
    <property type="entry name" value="39S RIBOSOMAL PROTEIN L10, MITOCHONDRIAL"/>
    <property type="match status" value="1"/>
</dbReference>
<dbReference type="Pfam" id="PF00466">
    <property type="entry name" value="Ribosomal_L10"/>
    <property type="match status" value="1"/>
</dbReference>
<dbReference type="SUPFAM" id="SSF160369">
    <property type="entry name" value="Ribosomal protein L10-like"/>
    <property type="match status" value="1"/>
</dbReference>
<gene>
    <name evidence="1" type="primary">rplJ</name>
    <name type="ordered locus">BURPS1710b_3788</name>
</gene>
<reference key="1">
    <citation type="journal article" date="2010" name="Genome Biol. Evol.">
        <title>Continuing evolution of Burkholderia mallei through genome reduction and large-scale rearrangements.</title>
        <authorList>
            <person name="Losada L."/>
            <person name="Ronning C.M."/>
            <person name="DeShazer D."/>
            <person name="Woods D."/>
            <person name="Fedorova N."/>
            <person name="Kim H.S."/>
            <person name="Shabalina S.A."/>
            <person name="Pearson T.R."/>
            <person name="Brinkac L."/>
            <person name="Tan P."/>
            <person name="Nandi T."/>
            <person name="Crabtree J."/>
            <person name="Badger J."/>
            <person name="Beckstrom-Sternberg S."/>
            <person name="Saqib M."/>
            <person name="Schutzer S.E."/>
            <person name="Keim P."/>
            <person name="Nierman W.C."/>
        </authorList>
    </citation>
    <scope>NUCLEOTIDE SEQUENCE [LARGE SCALE GENOMIC DNA]</scope>
    <source>
        <strain>1710b</strain>
    </source>
</reference>
<proteinExistence type="inferred from homology"/>
<accession>Q3JMQ1</accession>
<name>RL10_BURP1</name>
<feature type="chain" id="PRO_0000234836" description="Large ribosomal subunit protein uL10">
    <location>
        <begin position="1"/>
        <end position="165"/>
    </location>
</feature>